<proteinExistence type="evidence at transcript level"/>
<protein>
    <recommendedName>
        <fullName>Virion membrane protein OPG135</fullName>
    </recommendedName>
</protein>
<gene>
    <name type="primary">OPG135</name>
    <name type="ordered locus">MVA120L</name>
    <name type="ordered locus">ACAM3000_MVA_120</name>
    <name type="ORF">A9L</name>
</gene>
<evidence type="ECO:0000250" key="1">
    <source>
        <dbReference type="UniProtKB" id="Q85320"/>
    </source>
</evidence>
<evidence type="ECO:0000255" key="2"/>
<evidence type="ECO:0000256" key="3">
    <source>
        <dbReference type="SAM" id="MobiDB-lite"/>
    </source>
</evidence>
<evidence type="ECO:0000305" key="4"/>
<comment type="function">
    <text evidence="1">Envelope protein. Required for an early step in virion morphogenesis.</text>
</comment>
<comment type="subcellular location">
    <subcellularLocation>
        <location evidence="1">Virion membrane</location>
        <topology evidence="1">Single-pass membrane protein</topology>
    </subcellularLocation>
    <subcellularLocation>
        <location evidence="1">Host cytoplasm</location>
    </subcellularLocation>
    <text evidence="1">Component of the mature virion (MV) membrane. The mature virion is located in the cytoplasm of infected cells and is probably released by cell lysis. Also found in cytoplasmic virus factories.</text>
</comment>
<comment type="induction">
    <text>Expressed in the late phase of the viral replicative cycle.</text>
</comment>
<comment type="similarity">
    <text evidence="4">Belongs to the oerthopoxvirus OPG135 family.</text>
</comment>
<sequence>MSCYTAILKSVGGLALFQVANGAIDLCRHFFMYFCEQKLRPNSFWFVVVRAIASMIMYLVLGIALLYISEQDNKKNTNNDKRNESSINSNSSPK</sequence>
<accession>O57222</accession>
<name>PG135_VACCA</name>
<organismHost>
    <name type="scientific">Homo sapiens</name>
    <name type="common">Human</name>
    <dbReference type="NCBI Taxonomy" id="9606"/>
</organismHost>
<organism>
    <name type="scientific">Vaccinia virus (strain Ankara)</name>
    <name type="common">VACV</name>
    <dbReference type="NCBI Taxonomy" id="126794"/>
    <lineage>
        <taxon>Viruses</taxon>
        <taxon>Varidnaviria</taxon>
        <taxon>Bamfordvirae</taxon>
        <taxon>Nucleocytoviricota</taxon>
        <taxon>Pokkesviricetes</taxon>
        <taxon>Chitovirales</taxon>
        <taxon>Poxviridae</taxon>
        <taxon>Chordopoxvirinae</taxon>
        <taxon>Orthopoxvirus</taxon>
        <taxon>Vaccinia virus</taxon>
    </lineage>
</organism>
<feature type="signal peptide" evidence="2">
    <location>
        <begin position="1"/>
        <end position="22"/>
    </location>
</feature>
<feature type="chain" id="PRO_0000099225" description="Virion membrane protein OPG135">
    <location>
        <begin position="23"/>
        <end position="94"/>
    </location>
</feature>
<feature type="topological domain" description="Intravirion" evidence="2">
    <location>
        <begin position="23"/>
        <end position="45"/>
    </location>
</feature>
<feature type="transmembrane region" description="Helical" evidence="2">
    <location>
        <begin position="46"/>
        <end position="66"/>
    </location>
</feature>
<feature type="topological domain" description="Virion surface" evidence="2">
    <location>
        <begin position="67"/>
        <end position="83"/>
    </location>
</feature>
<feature type="region of interest" description="Disordered" evidence="3">
    <location>
        <begin position="74"/>
        <end position="94"/>
    </location>
</feature>
<feature type="compositionally biased region" description="Basic and acidic residues" evidence="3">
    <location>
        <begin position="74"/>
        <end position="84"/>
    </location>
</feature>
<feature type="compositionally biased region" description="Polar residues" evidence="3">
    <location>
        <begin position="85"/>
        <end position="94"/>
    </location>
</feature>
<feature type="glycosylation site" description="N-linked (GlcNAc...) asparagine; by host" evidence="2">
    <location>
        <position position="83"/>
    </location>
</feature>
<dbReference type="EMBL" id="U94848">
    <property type="protein sequence ID" value="AAB96461.1"/>
    <property type="molecule type" value="Genomic_DNA"/>
</dbReference>
<dbReference type="EMBL" id="AY603355">
    <property type="protein sequence ID" value="AAT10518.1"/>
    <property type="molecule type" value="Genomic_DNA"/>
</dbReference>
<dbReference type="PIR" id="T37396">
    <property type="entry name" value="T37396"/>
</dbReference>
<dbReference type="SMR" id="O57222"/>
<dbReference type="Proteomes" id="UP000159908">
    <property type="component" value="Segment"/>
</dbReference>
<dbReference type="Proteomes" id="UP000172909">
    <property type="component" value="Segment"/>
</dbReference>
<dbReference type="GO" id="GO:0030430">
    <property type="term" value="C:host cell cytoplasm"/>
    <property type="evidence" value="ECO:0007669"/>
    <property type="project" value="UniProtKB-SubCell"/>
</dbReference>
<dbReference type="GO" id="GO:0016020">
    <property type="term" value="C:membrane"/>
    <property type="evidence" value="ECO:0007669"/>
    <property type="project" value="UniProtKB-KW"/>
</dbReference>
<dbReference type="GO" id="GO:0019031">
    <property type="term" value="C:viral envelope"/>
    <property type="evidence" value="ECO:0007669"/>
    <property type="project" value="UniProtKB-KW"/>
</dbReference>
<dbReference type="GO" id="GO:0055036">
    <property type="term" value="C:virion membrane"/>
    <property type="evidence" value="ECO:0007669"/>
    <property type="project" value="UniProtKB-SubCell"/>
</dbReference>
<dbReference type="InterPro" id="IPR006920">
    <property type="entry name" value="Poxvirus_A9"/>
</dbReference>
<dbReference type="Pfam" id="PF04835">
    <property type="entry name" value="Pox_A9"/>
    <property type="match status" value="1"/>
</dbReference>
<reference key="1">
    <citation type="journal article" date="1998" name="Virology">
        <title>The complete genomic sequence of the modified vaccinia Ankara strain: comparison with other orthopoxviruses.</title>
        <authorList>
            <person name="Antoine G."/>
            <person name="Scheiflinger F."/>
            <person name="Dorner F."/>
            <person name="Falkner F.G."/>
        </authorList>
    </citation>
    <scope>NUCLEOTIDE SEQUENCE [LARGE SCALE GENOMIC DNA]</scope>
</reference>
<reference key="2">
    <citation type="submission" date="2004-04" db="EMBL/GenBank/DDBJ databases">
        <authorList>
            <person name="Esposito J.J."/>
            <person name="Frace M."/>
            <person name="Sammons S.A."/>
            <person name="Olsen-Rasmussen M.S."/>
            <person name="Osborne J."/>
            <person name="Khristova M."/>
            <person name="Wohlhueter R.M."/>
        </authorList>
    </citation>
    <scope>NUCLEOTIDE SEQUENCE [LARGE SCALE GENOMIC DNA]</scope>
    <source>
        <strain>Isolate Acambis 3000</strain>
    </source>
</reference>
<keyword id="KW-0325">Glycoprotein</keyword>
<keyword id="KW-1035">Host cytoplasm</keyword>
<keyword id="KW-0426">Late protein</keyword>
<keyword id="KW-0472">Membrane</keyword>
<keyword id="KW-0732">Signal</keyword>
<keyword id="KW-0812">Transmembrane</keyword>
<keyword id="KW-1133">Transmembrane helix</keyword>
<keyword id="KW-0261">Viral envelope protein</keyword>
<keyword id="KW-0946">Virion</keyword>